<reference key="1">
    <citation type="journal article" date="2000" name="Nature">
        <title>Sequence and analysis of chromosome 1 of the plant Arabidopsis thaliana.</title>
        <authorList>
            <person name="Theologis A."/>
            <person name="Ecker J.R."/>
            <person name="Palm C.J."/>
            <person name="Federspiel N.A."/>
            <person name="Kaul S."/>
            <person name="White O."/>
            <person name="Alonso J."/>
            <person name="Altafi H."/>
            <person name="Araujo R."/>
            <person name="Bowman C.L."/>
            <person name="Brooks S.Y."/>
            <person name="Buehler E."/>
            <person name="Chan A."/>
            <person name="Chao Q."/>
            <person name="Chen H."/>
            <person name="Cheuk R.F."/>
            <person name="Chin C.W."/>
            <person name="Chung M.K."/>
            <person name="Conn L."/>
            <person name="Conway A.B."/>
            <person name="Conway A.R."/>
            <person name="Creasy T.H."/>
            <person name="Dewar K."/>
            <person name="Dunn P."/>
            <person name="Etgu P."/>
            <person name="Feldblyum T.V."/>
            <person name="Feng J.-D."/>
            <person name="Fong B."/>
            <person name="Fujii C.Y."/>
            <person name="Gill J.E."/>
            <person name="Goldsmith A.D."/>
            <person name="Haas B."/>
            <person name="Hansen N.F."/>
            <person name="Hughes B."/>
            <person name="Huizar L."/>
            <person name="Hunter J.L."/>
            <person name="Jenkins J."/>
            <person name="Johnson-Hopson C."/>
            <person name="Khan S."/>
            <person name="Khaykin E."/>
            <person name="Kim C.J."/>
            <person name="Koo H.L."/>
            <person name="Kremenetskaia I."/>
            <person name="Kurtz D.B."/>
            <person name="Kwan A."/>
            <person name="Lam B."/>
            <person name="Langin-Hooper S."/>
            <person name="Lee A."/>
            <person name="Lee J.M."/>
            <person name="Lenz C.A."/>
            <person name="Li J.H."/>
            <person name="Li Y.-P."/>
            <person name="Lin X."/>
            <person name="Liu S.X."/>
            <person name="Liu Z.A."/>
            <person name="Luros J.S."/>
            <person name="Maiti R."/>
            <person name="Marziali A."/>
            <person name="Militscher J."/>
            <person name="Miranda M."/>
            <person name="Nguyen M."/>
            <person name="Nierman W.C."/>
            <person name="Osborne B.I."/>
            <person name="Pai G."/>
            <person name="Peterson J."/>
            <person name="Pham P.K."/>
            <person name="Rizzo M."/>
            <person name="Rooney T."/>
            <person name="Rowley D."/>
            <person name="Sakano H."/>
            <person name="Salzberg S.L."/>
            <person name="Schwartz J.R."/>
            <person name="Shinn P."/>
            <person name="Southwick A.M."/>
            <person name="Sun H."/>
            <person name="Tallon L.J."/>
            <person name="Tambunga G."/>
            <person name="Toriumi M.J."/>
            <person name="Town C.D."/>
            <person name="Utterback T."/>
            <person name="Van Aken S."/>
            <person name="Vaysberg M."/>
            <person name="Vysotskaia V.S."/>
            <person name="Walker M."/>
            <person name="Wu D."/>
            <person name="Yu G."/>
            <person name="Fraser C.M."/>
            <person name="Venter J.C."/>
            <person name="Davis R.W."/>
        </authorList>
    </citation>
    <scope>NUCLEOTIDE SEQUENCE [LARGE SCALE GENOMIC DNA]</scope>
    <source>
        <strain>cv. Columbia</strain>
    </source>
</reference>
<reference key="2">
    <citation type="journal article" date="2017" name="Plant J.">
        <title>Araport11: a complete reannotation of the Arabidopsis thaliana reference genome.</title>
        <authorList>
            <person name="Cheng C.Y."/>
            <person name="Krishnakumar V."/>
            <person name="Chan A.P."/>
            <person name="Thibaud-Nissen F."/>
            <person name="Schobel S."/>
            <person name="Town C.D."/>
        </authorList>
    </citation>
    <scope>GENOME REANNOTATION</scope>
    <source>
        <strain>cv. Columbia</strain>
    </source>
</reference>
<reference key="3">
    <citation type="journal article" date="2003" name="Science">
        <title>Empirical analysis of transcriptional activity in the Arabidopsis genome.</title>
        <authorList>
            <person name="Yamada K."/>
            <person name="Lim J."/>
            <person name="Dale J.M."/>
            <person name="Chen H."/>
            <person name="Shinn P."/>
            <person name="Palm C.J."/>
            <person name="Southwick A.M."/>
            <person name="Wu H.C."/>
            <person name="Kim C.J."/>
            <person name="Nguyen M."/>
            <person name="Pham P.K."/>
            <person name="Cheuk R.F."/>
            <person name="Karlin-Newmann G."/>
            <person name="Liu S.X."/>
            <person name="Lam B."/>
            <person name="Sakano H."/>
            <person name="Wu T."/>
            <person name="Yu G."/>
            <person name="Miranda M."/>
            <person name="Quach H.L."/>
            <person name="Tripp M."/>
            <person name="Chang C.H."/>
            <person name="Lee J.M."/>
            <person name="Toriumi M.J."/>
            <person name="Chan M.M."/>
            <person name="Tang C.C."/>
            <person name="Onodera C.S."/>
            <person name="Deng J.M."/>
            <person name="Akiyama K."/>
            <person name="Ansari Y."/>
            <person name="Arakawa T."/>
            <person name="Banh J."/>
            <person name="Banno F."/>
            <person name="Bowser L."/>
            <person name="Brooks S.Y."/>
            <person name="Carninci P."/>
            <person name="Chao Q."/>
            <person name="Choy N."/>
            <person name="Enju A."/>
            <person name="Goldsmith A.D."/>
            <person name="Gurjal M."/>
            <person name="Hansen N.F."/>
            <person name="Hayashizaki Y."/>
            <person name="Johnson-Hopson C."/>
            <person name="Hsuan V.W."/>
            <person name="Iida K."/>
            <person name="Karnes M."/>
            <person name="Khan S."/>
            <person name="Koesema E."/>
            <person name="Ishida J."/>
            <person name="Jiang P.X."/>
            <person name="Jones T."/>
            <person name="Kawai J."/>
            <person name="Kamiya A."/>
            <person name="Meyers C."/>
            <person name="Nakajima M."/>
            <person name="Narusaka M."/>
            <person name="Seki M."/>
            <person name="Sakurai T."/>
            <person name="Satou M."/>
            <person name="Tamse R."/>
            <person name="Vaysberg M."/>
            <person name="Wallender E.K."/>
            <person name="Wong C."/>
            <person name="Yamamura Y."/>
            <person name="Yuan S."/>
            <person name="Shinozaki K."/>
            <person name="Davis R.W."/>
            <person name="Theologis A."/>
            <person name="Ecker J.R."/>
        </authorList>
    </citation>
    <scope>NUCLEOTIDE SEQUENCE [LARGE SCALE MRNA] (ISOFORM 1)</scope>
    <source>
        <strain>cv. Columbia</strain>
    </source>
</reference>
<reference key="4">
    <citation type="journal article" date="2007" name="Plant Cell">
        <title>Arabidopsis BRANCHED1 acts as an integrator of branching signals within axillary buds.</title>
        <authorList>
            <person name="Aguilar-Martinez J.A."/>
            <person name="Poza-Carrion C."/>
            <person name="Cubas P."/>
        </authorList>
    </citation>
    <scope>GENE FAMILY</scope>
    <scope>NOMENCLATURE</scope>
</reference>
<reference key="5">
    <citation type="journal article" date="2011" name="Plant Cell">
        <title>An Arabidopsis dual-localized pentatricopeptide repeat protein interacts with nuclear proteins involved in gene expression regulation.</title>
        <authorList>
            <person name="Hammani K."/>
            <person name="Gobert A."/>
            <person name="Hleibieh K."/>
            <person name="Choulier L."/>
            <person name="Small I."/>
            <person name="Giege P."/>
        </authorList>
    </citation>
    <scope>INTERACTION WITH PP438/PNM1</scope>
    <scope>FUNCTION</scope>
</reference>
<reference key="6">
    <citation type="journal article" date="2014" name="J. Genet. Genomics">
        <title>SPOROCYTELESS is a novel embryophyte-specific transcription repressor that interacts with TPL and TCP proteins in Arabidopsis.</title>
        <authorList>
            <person name="Chen G.H."/>
            <person name="Sun J.Y."/>
            <person name="Liu M."/>
            <person name="Liu J."/>
            <person name="Yang W.C."/>
        </authorList>
    </citation>
    <scope>INTERACTION WITH SPL</scope>
</reference>
<evidence type="ECO:0000255" key="1"/>
<evidence type="ECO:0000255" key="2">
    <source>
        <dbReference type="PROSITE-ProRule" id="PRU00701"/>
    </source>
</evidence>
<evidence type="ECO:0000256" key="3">
    <source>
        <dbReference type="SAM" id="MobiDB-lite"/>
    </source>
</evidence>
<evidence type="ECO:0000269" key="4">
    <source>
    </source>
</evidence>
<evidence type="ECO:0000269" key="5">
    <source>
    </source>
</evidence>
<evidence type="ECO:0000305" key="6"/>
<keyword id="KW-0025">Alternative splicing</keyword>
<keyword id="KW-0175">Coiled coil</keyword>
<keyword id="KW-0238">DNA-binding</keyword>
<keyword id="KW-0539">Nucleus</keyword>
<keyword id="KW-1185">Reference proteome</keyword>
<keyword id="KW-0804">Transcription</keyword>
<keyword id="KW-0805">Transcription regulation</keyword>
<protein>
    <recommendedName>
        <fullName>Transcription factor TCP8</fullName>
    </recommendedName>
</protein>
<sequence>MDLSDIRNNNNDTAAVATGGGARQLVDASLSIVPRSTPPEDSTLATTSSTATATTTKRSTKDRHTKVDGRGRRIRMPALCAARVFQLTRELGHKSDGETIEWLLQQAEPAIVAATGTGTIPANFSTLSVSLRSSGSTLSAPPSKSVPLYGALGLTHHQYDEQGGGGVFAAHTSPLLGFHHQLQHHQNQNQNQDPVETIPEGENFSRKRYRSVDLSKENDDRKQNENKSLKESETSGPTAAPMWAVAPPSRSGAGNTFWMLPVPTTAGNQMESSSNNNTAAGHRAPPMWPFVNSAGGGAGGGGGAATHFMAGTGFSFPMDQYRGSPLQLGSFLAQPQPTQNLGLSMPDSNLGMLAALNSAYSRGGNANANAEQANNAVEHQEKQQQSDHDDDSREENSNSSE</sequence>
<organism>
    <name type="scientific">Arabidopsis thaliana</name>
    <name type="common">Mouse-ear cress</name>
    <dbReference type="NCBI Taxonomy" id="3702"/>
    <lineage>
        <taxon>Eukaryota</taxon>
        <taxon>Viridiplantae</taxon>
        <taxon>Streptophyta</taxon>
        <taxon>Embryophyta</taxon>
        <taxon>Tracheophyta</taxon>
        <taxon>Spermatophyta</taxon>
        <taxon>Magnoliopsida</taxon>
        <taxon>eudicotyledons</taxon>
        <taxon>Gunneridae</taxon>
        <taxon>Pentapetalae</taxon>
        <taxon>rosids</taxon>
        <taxon>malvids</taxon>
        <taxon>Brassicales</taxon>
        <taxon>Brassicaceae</taxon>
        <taxon>Camelineae</taxon>
        <taxon>Arabidopsis</taxon>
    </lineage>
</organism>
<gene>
    <name type="primary">TCP8</name>
    <name type="ordered locus">At1g58100</name>
    <name type="ORF">T15M6.11</name>
    <name type="ORF">T18I24.2</name>
</gene>
<name>TCP8_ARATH</name>
<dbReference type="EMBL" id="AC079131">
    <property type="protein sequence ID" value="AAG50759.1"/>
    <property type="molecule type" value="Genomic_DNA"/>
</dbReference>
<dbReference type="EMBL" id="AC079604">
    <property type="protein sequence ID" value="AAG50694.1"/>
    <property type="molecule type" value="Genomic_DNA"/>
</dbReference>
<dbReference type="EMBL" id="CP002684">
    <property type="protein sequence ID" value="AEE33497.1"/>
    <property type="molecule type" value="Genomic_DNA"/>
</dbReference>
<dbReference type="EMBL" id="CP002684">
    <property type="protein sequence ID" value="AEE33498.1"/>
    <property type="molecule type" value="Genomic_DNA"/>
</dbReference>
<dbReference type="EMBL" id="AY081344">
    <property type="protein sequence ID" value="AAL91233.1"/>
    <property type="molecule type" value="mRNA"/>
</dbReference>
<dbReference type="EMBL" id="BT008493">
    <property type="protein sequence ID" value="AAP37852.1"/>
    <property type="molecule type" value="mRNA"/>
</dbReference>
<dbReference type="PIR" id="C96614">
    <property type="entry name" value="C96614"/>
</dbReference>
<dbReference type="RefSeq" id="NP_001077739.1">
    <molecule id="Q9C518-2"/>
    <property type="nucleotide sequence ID" value="NM_001084270.1"/>
</dbReference>
<dbReference type="RefSeq" id="NP_176107.1">
    <molecule id="Q9C518-1"/>
    <property type="nucleotide sequence ID" value="NM_104592.5"/>
</dbReference>
<dbReference type="SMR" id="Q9C518"/>
<dbReference type="BioGRID" id="27402">
    <property type="interactions" value="84"/>
</dbReference>
<dbReference type="FunCoup" id="Q9C518">
    <property type="interactions" value="810"/>
</dbReference>
<dbReference type="IntAct" id="Q9C518">
    <property type="interactions" value="62"/>
</dbReference>
<dbReference type="STRING" id="3702.Q9C518"/>
<dbReference type="GlyGen" id="Q9C518">
    <property type="glycosylation" value="7 sites, 1 O-linked glycan (7 sites)"/>
</dbReference>
<dbReference type="iPTMnet" id="Q9C518"/>
<dbReference type="PaxDb" id="3702-AT1G58100.1"/>
<dbReference type="ProteomicsDB" id="234205">
    <molecule id="Q9C518-1"/>
</dbReference>
<dbReference type="EnsemblPlants" id="AT1G58100.1">
    <molecule id="Q9C518-1"/>
    <property type="protein sequence ID" value="AT1G58100.1"/>
    <property type="gene ID" value="AT1G58100"/>
</dbReference>
<dbReference type="EnsemblPlants" id="AT1G58100.2">
    <molecule id="Q9C518-2"/>
    <property type="protein sequence ID" value="AT1G58100.2"/>
    <property type="gene ID" value="AT1G58100"/>
</dbReference>
<dbReference type="GeneID" id="842177"/>
<dbReference type="Gramene" id="AT1G58100.1">
    <molecule id="Q9C518-1"/>
    <property type="protein sequence ID" value="AT1G58100.1"/>
    <property type="gene ID" value="AT1G58100"/>
</dbReference>
<dbReference type="Gramene" id="AT1G58100.2">
    <molecule id="Q9C518-2"/>
    <property type="protein sequence ID" value="AT1G58100.2"/>
    <property type="gene ID" value="AT1G58100"/>
</dbReference>
<dbReference type="KEGG" id="ath:AT1G58100"/>
<dbReference type="Araport" id="AT1G58100"/>
<dbReference type="TAIR" id="AT1G58100">
    <property type="gene designation" value="TCP8"/>
</dbReference>
<dbReference type="eggNOG" id="ENOG502QVJ6">
    <property type="taxonomic scope" value="Eukaryota"/>
</dbReference>
<dbReference type="HOGENOM" id="CLU_025170_2_1_1"/>
<dbReference type="InParanoid" id="Q9C518"/>
<dbReference type="OMA" id="VQAPLHF"/>
<dbReference type="PhylomeDB" id="Q9C518"/>
<dbReference type="PRO" id="PR:Q9C518"/>
<dbReference type="Proteomes" id="UP000006548">
    <property type="component" value="Chromosome 1"/>
</dbReference>
<dbReference type="ExpressionAtlas" id="Q9C518">
    <property type="expression patterns" value="baseline and differential"/>
</dbReference>
<dbReference type="GO" id="GO:0005634">
    <property type="term" value="C:nucleus"/>
    <property type="evidence" value="ECO:0007669"/>
    <property type="project" value="UniProtKB-SubCell"/>
</dbReference>
<dbReference type="GO" id="GO:0003700">
    <property type="term" value="F:DNA-binding transcription factor activity"/>
    <property type="evidence" value="ECO:0000250"/>
    <property type="project" value="TAIR"/>
</dbReference>
<dbReference type="GO" id="GO:0000978">
    <property type="term" value="F:RNA polymerase II cis-regulatory region sequence-specific DNA binding"/>
    <property type="evidence" value="ECO:0000314"/>
    <property type="project" value="TAIR"/>
</dbReference>
<dbReference type="GO" id="GO:0000976">
    <property type="term" value="F:transcription cis-regulatory region binding"/>
    <property type="evidence" value="ECO:0000353"/>
    <property type="project" value="TAIR"/>
</dbReference>
<dbReference type="GO" id="GO:0006355">
    <property type="term" value="P:regulation of DNA-templated transcription"/>
    <property type="evidence" value="ECO:0000304"/>
    <property type="project" value="TAIR"/>
</dbReference>
<dbReference type="InterPro" id="IPR017887">
    <property type="entry name" value="TF_TCP_subgr"/>
</dbReference>
<dbReference type="InterPro" id="IPR005333">
    <property type="entry name" value="Transcription_factor_TCP"/>
</dbReference>
<dbReference type="PANTHER" id="PTHR31072">
    <property type="entry name" value="TRANSCRIPTION FACTOR TCP4-RELATED"/>
    <property type="match status" value="1"/>
</dbReference>
<dbReference type="PANTHER" id="PTHR31072:SF251">
    <property type="entry name" value="TRANSCRIPTION FACTOR TCP8"/>
    <property type="match status" value="1"/>
</dbReference>
<dbReference type="Pfam" id="PF03634">
    <property type="entry name" value="TCP"/>
    <property type="match status" value="1"/>
</dbReference>
<dbReference type="PROSITE" id="PS51369">
    <property type="entry name" value="TCP"/>
    <property type="match status" value="1"/>
</dbReference>
<accession>Q9C518</accession>
<accession>A8MQM9</accession>
<comment type="function">
    <text evidence="4">Can specifically bind site II elements in the promoter region of PP438/PNM1.</text>
</comment>
<comment type="subunit">
    <text evidence="4 5">Interacts with PP438/PNM1 (PubMed:21297037). Interacts with SPL (PubMed:25527103).</text>
</comment>
<comment type="interaction">
    <interactant intactId="EBI-3134124">
        <id>Q9C518</id>
    </interactant>
    <interactant intactId="EBI-1536772">
        <id>O04292</id>
        <label>ATHB-9</label>
    </interactant>
    <organismsDiffer>false</organismsDiffer>
    <experiments>4</experiments>
</comment>
<comment type="interaction">
    <interactant intactId="EBI-3134124">
        <id>Q9C518</id>
    </interactant>
    <interactant intactId="EBI-4448729">
        <id>Q9ZVC9</id>
        <label>FRS3</label>
    </interactant>
    <organismsDiffer>false</organismsDiffer>
    <experiments>4</experiments>
</comment>
<comment type="interaction">
    <interactant intactId="EBI-3134124">
        <id>Q9C518</id>
    </interactant>
    <interactant intactId="EBI-6913662">
        <id>Q9FME4</id>
        <label>PNM1</label>
    </interactant>
    <organismsDiffer>false</organismsDiffer>
    <experiments>4</experiments>
</comment>
<comment type="interaction">
    <interactant intactId="EBI-3134124">
        <id>Q9C518</id>
    </interactant>
    <interactant intactId="EBI-4424563">
        <id>Q93Z00</id>
        <label>TCP14</label>
    </interactant>
    <organismsDiffer>false</organismsDiffer>
    <experiments>4</experiments>
</comment>
<comment type="interaction">
    <interactant intactId="EBI-3134124">
        <id>Q9C518</id>
    </interactant>
    <interactant intactId="EBI-4426144">
        <id>Q9C9L2</id>
        <label>TCP15</label>
    </interactant>
    <organismsDiffer>false</organismsDiffer>
    <experiments>4</experiments>
</comment>
<comment type="interaction">
    <interactant intactId="EBI-3134124">
        <id>Q9C518</id>
    </interactant>
    <interactant intactId="EBI-4426168">
        <id>Q9FTA2</id>
        <label>TCP21</label>
    </interactant>
    <organismsDiffer>false</organismsDiffer>
    <experiments>3</experiments>
</comment>
<comment type="interaction">
    <interactant intactId="EBI-3134124">
        <id>Q9C518</id>
    </interactant>
    <interactant intactId="EBI-15192297">
        <id>Q9LQF0</id>
        <label>TCP23</label>
    </interactant>
    <organismsDiffer>false</organismsDiffer>
    <experiments>3</experiments>
</comment>
<comment type="interaction">
    <interactant intactId="EBI-3134124">
        <id>Q9C518</id>
    </interactant>
    <interactant intactId="EBI-1115523">
        <id>Q9LDT3</id>
        <label>YAB4</label>
    </interactant>
    <organismsDiffer>false</organismsDiffer>
    <experiments>3</experiments>
</comment>
<comment type="subcellular location">
    <subcellularLocation>
        <location evidence="6">Nucleus</location>
    </subcellularLocation>
</comment>
<comment type="alternative products">
    <event type="alternative splicing"/>
    <isoform>
        <id>Q9C518-1</id>
        <name>1</name>
        <sequence type="displayed"/>
    </isoform>
    <isoform>
        <id>Q9C518-2</id>
        <name>2</name>
        <sequence type="described" ref="VSP_033115"/>
    </isoform>
</comment>
<feature type="chain" id="PRO_0000330782" description="Transcription factor TCP8">
    <location>
        <begin position="1"/>
        <end position="401"/>
    </location>
</feature>
<feature type="domain" description="TCP" evidence="2">
    <location>
        <begin position="60"/>
        <end position="114"/>
    </location>
</feature>
<feature type="region of interest" description="Disordered" evidence="3">
    <location>
        <begin position="1"/>
        <end position="20"/>
    </location>
</feature>
<feature type="region of interest" description="Disordered" evidence="3">
    <location>
        <begin position="34"/>
        <end position="70"/>
    </location>
</feature>
<feature type="region of interest" description="Disordered" evidence="3">
    <location>
        <begin position="182"/>
        <end position="245"/>
    </location>
</feature>
<feature type="region of interest" description="Disordered" evidence="3">
    <location>
        <begin position="362"/>
        <end position="401"/>
    </location>
</feature>
<feature type="coiled-coil region" evidence="1">
    <location>
        <begin position="364"/>
        <end position="389"/>
    </location>
</feature>
<feature type="compositionally biased region" description="Polar residues" evidence="3">
    <location>
        <begin position="1"/>
        <end position="13"/>
    </location>
</feature>
<feature type="compositionally biased region" description="Low complexity" evidence="3">
    <location>
        <begin position="42"/>
        <end position="56"/>
    </location>
</feature>
<feature type="compositionally biased region" description="Basic and acidic residues" evidence="3">
    <location>
        <begin position="210"/>
        <end position="233"/>
    </location>
</feature>
<feature type="compositionally biased region" description="Low complexity" evidence="3">
    <location>
        <begin position="365"/>
        <end position="376"/>
    </location>
</feature>
<feature type="compositionally biased region" description="Basic and acidic residues" evidence="3">
    <location>
        <begin position="378"/>
        <end position="401"/>
    </location>
</feature>
<feature type="splice variant" id="VSP_033115" description="In isoform 2." evidence="6">
    <location>
        <begin position="93"/>
        <end position="116"/>
    </location>
</feature>
<proteinExistence type="evidence at protein level"/>